<feature type="chain" id="PRO_0000135621" description="Probable pyridoxal 5'-phosphate synthase subunit SNO3">
    <location>
        <begin position="1"/>
        <end position="222"/>
    </location>
</feature>
<feature type="active site" description="Nucleophile" evidence="1">
    <location>
        <position position="91"/>
    </location>
</feature>
<feature type="active site" description="Charge relay system" evidence="1">
    <location>
        <position position="197"/>
    </location>
</feature>
<feature type="active site" description="Charge relay system" evidence="1">
    <location>
        <position position="199"/>
    </location>
</feature>
<feature type="binding site" evidence="1">
    <location>
        <begin position="58"/>
        <end position="60"/>
    </location>
    <ligand>
        <name>L-glutamine</name>
        <dbReference type="ChEBI" id="CHEBI:58359"/>
    </ligand>
</feature>
<feature type="binding site" evidence="1">
    <location>
        <position position="120"/>
    </location>
    <ligand>
        <name>L-glutamine</name>
        <dbReference type="ChEBI" id="CHEBI:58359"/>
    </ligand>
</feature>
<feature type="binding site" evidence="1">
    <location>
        <begin position="151"/>
        <end position="152"/>
    </location>
    <ligand>
        <name>L-glutamine</name>
        <dbReference type="ChEBI" id="CHEBI:58359"/>
    </ligand>
</feature>
<evidence type="ECO:0000250" key="1">
    <source>
        <dbReference type="UniProtKB" id="P37528"/>
    </source>
</evidence>
<evidence type="ECO:0000250" key="2">
    <source>
        <dbReference type="UniProtKB" id="Q03144"/>
    </source>
</evidence>
<evidence type="ECO:0000269" key="3">
    <source>
    </source>
</evidence>
<evidence type="ECO:0000269" key="4">
    <source>
    </source>
</evidence>
<evidence type="ECO:0000305" key="5"/>
<sequence length="222" mass="25132">MTVVIGVLALQGAFIEHVRHVEKCIVENRDFYEKKLSVMTVKDKNQLAQCDALIIPGGESTAMSLIAERTGFYDDLYAFVHNPSKVTWGTCAGLIYISQQLSNEAKLVKTLNLLKVKVKRNAFGRQAQSSTRICDFSNFIPHCNDFPATFIRAPVIEEVLDPEHVQVLYKLDGKDNGGQELIVAAKQKNNILATSFHPELAENDIRFHDWFIREFVLKNYSK</sequence>
<comment type="function">
    <text evidence="2 3">Catalyzes the hydrolysis of glutamine to glutamate and ammonia as part of the biosynthesis of pyridoxal 5'-phosphate. The resulting ammonia molecule is channeled to the active site of a SNZ isoform.</text>
</comment>
<comment type="catalytic activity">
    <reaction evidence="2">
        <text>aldehydo-D-ribose 5-phosphate + D-glyceraldehyde 3-phosphate + L-glutamine = pyridoxal 5'-phosphate + L-glutamate + phosphate + 3 H2O + H(+)</text>
        <dbReference type="Rhea" id="RHEA:31507"/>
        <dbReference type="ChEBI" id="CHEBI:15377"/>
        <dbReference type="ChEBI" id="CHEBI:15378"/>
        <dbReference type="ChEBI" id="CHEBI:29985"/>
        <dbReference type="ChEBI" id="CHEBI:43474"/>
        <dbReference type="ChEBI" id="CHEBI:58273"/>
        <dbReference type="ChEBI" id="CHEBI:58359"/>
        <dbReference type="ChEBI" id="CHEBI:59776"/>
        <dbReference type="ChEBI" id="CHEBI:597326"/>
        <dbReference type="EC" id="4.3.3.6"/>
    </reaction>
</comment>
<comment type="catalytic activity">
    <reaction evidence="2">
        <text>L-glutamine + H2O = L-glutamate + NH4(+)</text>
        <dbReference type="Rhea" id="RHEA:15889"/>
        <dbReference type="ChEBI" id="CHEBI:15377"/>
        <dbReference type="ChEBI" id="CHEBI:28938"/>
        <dbReference type="ChEBI" id="CHEBI:29985"/>
        <dbReference type="ChEBI" id="CHEBI:58359"/>
        <dbReference type="EC" id="3.5.1.2"/>
    </reaction>
</comment>
<comment type="pathway">
    <text evidence="2">Cofactor biosynthesis; pyridoxal 5'-phosphate biosynthesis.</text>
</comment>
<comment type="miscellaneous">
    <text evidence="4">Present with 195 molecules/cell in log phase SD medium.</text>
</comment>
<comment type="similarity">
    <text evidence="5">Belongs to the glutaminase PdxT/SNO family.</text>
</comment>
<organism>
    <name type="scientific">Saccharomyces cerevisiae (strain ATCC 204508 / S288c)</name>
    <name type="common">Baker's yeast</name>
    <dbReference type="NCBI Taxonomy" id="559292"/>
    <lineage>
        <taxon>Eukaryota</taxon>
        <taxon>Fungi</taxon>
        <taxon>Dikarya</taxon>
        <taxon>Ascomycota</taxon>
        <taxon>Saccharomycotina</taxon>
        <taxon>Saccharomycetes</taxon>
        <taxon>Saccharomycetales</taxon>
        <taxon>Saccharomycetaceae</taxon>
        <taxon>Saccharomyces</taxon>
    </lineage>
</organism>
<keyword id="KW-0315">Glutamine amidotransferase</keyword>
<keyword id="KW-0378">Hydrolase</keyword>
<keyword id="KW-0456">Lyase</keyword>
<keyword id="KW-0663">Pyridoxal phosphate</keyword>
<keyword id="KW-1185">Reference proteome</keyword>
<reference key="1">
    <citation type="journal article" date="1995" name="Nat. Genet.">
        <title>Analysis of the nucleotide sequence of chromosome VI from Saccharomyces cerevisiae.</title>
        <authorList>
            <person name="Murakami Y."/>
            <person name="Naitou M."/>
            <person name="Hagiwara H."/>
            <person name="Shibata T."/>
            <person name="Ozawa M."/>
            <person name="Sasanuma S."/>
            <person name="Sasanuma M."/>
            <person name="Tsuchiya Y."/>
            <person name="Soeda E."/>
            <person name="Yokoyama K."/>
            <person name="Yamazaki M."/>
            <person name="Tashiro H."/>
            <person name="Eki T."/>
        </authorList>
    </citation>
    <scope>NUCLEOTIDE SEQUENCE [LARGE SCALE GENOMIC DNA]</scope>
    <source>
        <strain>ATCC 204508 / S288c</strain>
    </source>
</reference>
<reference key="2">
    <citation type="journal article" date="2014" name="G3 (Bethesda)">
        <title>The reference genome sequence of Saccharomyces cerevisiae: Then and now.</title>
        <authorList>
            <person name="Engel S.R."/>
            <person name="Dietrich F.S."/>
            <person name="Fisk D.G."/>
            <person name="Binkley G."/>
            <person name="Balakrishnan R."/>
            <person name="Costanzo M.C."/>
            <person name="Dwight S.S."/>
            <person name="Hitz B.C."/>
            <person name="Karra K."/>
            <person name="Nash R.S."/>
            <person name="Weng S."/>
            <person name="Wong E.D."/>
            <person name="Lloyd P."/>
            <person name="Skrzypek M.S."/>
            <person name="Miyasato S.R."/>
            <person name="Simison M."/>
            <person name="Cherry J.M."/>
        </authorList>
    </citation>
    <scope>GENOME REANNOTATION</scope>
    <source>
        <strain>ATCC 204508 / S288c</strain>
    </source>
</reference>
<reference key="3">
    <citation type="journal article" date="2002" name="Yeast">
        <title>Functional analysis of yeast gene families involved in metabolism of vitamins B1 and B6.</title>
        <authorList>
            <person name="Rodriguez-Navarro S."/>
            <person name="Llorente B."/>
            <person name="Rodriguez-Manzaneque M.T."/>
            <person name="Ramne A."/>
            <person name="Uber G."/>
            <person name="Marchesan D."/>
            <person name="Dujon B."/>
            <person name="Herrero E."/>
            <person name="Sunnerhagen P."/>
            <person name="Perez-Ortin J.E."/>
        </authorList>
    </citation>
    <scope>FUNCTION</scope>
</reference>
<reference key="4">
    <citation type="journal article" date="2003" name="Nature">
        <title>Global analysis of protein expression in yeast.</title>
        <authorList>
            <person name="Ghaemmaghami S."/>
            <person name="Huh W.-K."/>
            <person name="Bower K."/>
            <person name="Howson R.W."/>
            <person name="Belle A."/>
            <person name="Dephoure N."/>
            <person name="O'Shea E.K."/>
            <person name="Weissman J.S."/>
        </authorList>
    </citation>
    <scope>LEVEL OF PROTEIN EXPRESSION [LARGE SCALE ANALYSIS]</scope>
</reference>
<name>SNO3_YEAST</name>
<gene>
    <name type="primary">SNO3</name>
    <name type="ordered locus">YFL060C</name>
</gene>
<proteinExistence type="evidence at protein level"/>
<accession>P43544</accession>
<accession>D6VTH0</accession>
<dbReference type="EC" id="4.3.3.6"/>
<dbReference type="EC" id="3.5.1.2"/>
<dbReference type="EMBL" id="D50617">
    <property type="protein sequence ID" value="BAA09181.1"/>
    <property type="molecule type" value="Genomic_DNA"/>
</dbReference>
<dbReference type="EMBL" id="BK006940">
    <property type="protein sequence ID" value="DAA12380.1"/>
    <property type="molecule type" value="Genomic_DNA"/>
</dbReference>
<dbReference type="PIR" id="S56195">
    <property type="entry name" value="S56195"/>
</dbReference>
<dbReference type="RefSeq" id="NP_116595.1">
    <property type="nucleotide sequence ID" value="NM_001179907.1"/>
</dbReference>
<dbReference type="SMR" id="P43544"/>
<dbReference type="BioGRID" id="31087">
    <property type="interactions" value="10"/>
</dbReference>
<dbReference type="DIP" id="DIP-1645N"/>
<dbReference type="FunCoup" id="P43544">
    <property type="interactions" value="189"/>
</dbReference>
<dbReference type="IntAct" id="P43544">
    <property type="interactions" value="5"/>
</dbReference>
<dbReference type="MINT" id="P43544"/>
<dbReference type="STRING" id="4932.YFL060C"/>
<dbReference type="MEROPS" id="C26.A32"/>
<dbReference type="PaxDb" id="4932-YFL060C"/>
<dbReference type="PeptideAtlas" id="P43544"/>
<dbReference type="EnsemblFungi" id="YFL060C_mRNA">
    <property type="protein sequence ID" value="YFL060C"/>
    <property type="gene ID" value="YFL060C"/>
</dbReference>
<dbReference type="GeneID" id="850484"/>
<dbReference type="KEGG" id="sce:YFL060C"/>
<dbReference type="AGR" id="SGD:S000001834"/>
<dbReference type="SGD" id="S000001834">
    <property type="gene designation" value="SNO3"/>
</dbReference>
<dbReference type="VEuPathDB" id="FungiDB:YFL060C"/>
<dbReference type="eggNOG" id="KOG3210">
    <property type="taxonomic scope" value="Eukaryota"/>
</dbReference>
<dbReference type="GeneTree" id="ENSGT00390000011516"/>
<dbReference type="HOGENOM" id="CLU_069674_0_1_1"/>
<dbReference type="InParanoid" id="P43544"/>
<dbReference type="OMA" id="NIEMYSE"/>
<dbReference type="OrthoDB" id="2039at2759"/>
<dbReference type="BioCyc" id="YEAST:G3O-30407-MONOMER"/>
<dbReference type="UniPathway" id="UPA00245"/>
<dbReference type="PRO" id="PR:P43544"/>
<dbReference type="Proteomes" id="UP000002311">
    <property type="component" value="Chromosome VI"/>
</dbReference>
<dbReference type="RNAct" id="P43544">
    <property type="molecule type" value="protein"/>
</dbReference>
<dbReference type="GO" id="GO:0005829">
    <property type="term" value="C:cytosol"/>
    <property type="evidence" value="ECO:0000318"/>
    <property type="project" value="GO_Central"/>
</dbReference>
<dbReference type="GO" id="GO:1903600">
    <property type="term" value="C:glutaminase complex"/>
    <property type="evidence" value="ECO:0000318"/>
    <property type="project" value="GO_Central"/>
</dbReference>
<dbReference type="GO" id="GO:0004359">
    <property type="term" value="F:glutaminase activity"/>
    <property type="evidence" value="ECO:0007669"/>
    <property type="project" value="UniProtKB-EC"/>
</dbReference>
<dbReference type="GO" id="GO:0036381">
    <property type="term" value="F:pyridoxal 5'-phosphate synthase (glutamine hydrolysing) activity"/>
    <property type="evidence" value="ECO:0007669"/>
    <property type="project" value="UniProtKB-EC"/>
</dbReference>
<dbReference type="GO" id="GO:0042823">
    <property type="term" value="P:pyridoxal phosphate biosynthetic process"/>
    <property type="evidence" value="ECO:0000318"/>
    <property type="project" value="GO_Central"/>
</dbReference>
<dbReference type="GO" id="GO:0008614">
    <property type="term" value="P:pyridoxine metabolic process"/>
    <property type="evidence" value="ECO:0000314"/>
    <property type="project" value="SGD"/>
</dbReference>
<dbReference type="CDD" id="cd01749">
    <property type="entry name" value="GATase1_PB"/>
    <property type="match status" value="1"/>
</dbReference>
<dbReference type="FunFam" id="3.40.50.880:FF:000042">
    <property type="entry name" value="Pyridoxine 2"/>
    <property type="match status" value="1"/>
</dbReference>
<dbReference type="Gene3D" id="3.40.50.880">
    <property type="match status" value="1"/>
</dbReference>
<dbReference type="InterPro" id="IPR029062">
    <property type="entry name" value="Class_I_gatase-like"/>
</dbReference>
<dbReference type="InterPro" id="IPR002161">
    <property type="entry name" value="PdxT/SNO"/>
</dbReference>
<dbReference type="InterPro" id="IPR021196">
    <property type="entry name" value="PdxT/SNO_CS"/>
</dbReference>
<dbReference type="NCBIfam" id="TIGR03800">
    <property type="entry name" value="PLP_synth_Pdx2"/>
    <property type="match status" value="1"/>
</dbReference>
<dbReference type="PANTHER" id="PTHR31559">
    <property type="entry name" value="PYRIDOXAL 5'-PHOSPHATE SYNTHASE SUBUNIT SNO"/>
    <property type="match status" value="1"/>
</dbReference>
<dbReference type="PANTHER" id="PTHR31559:SF0">
    <property type="entry name" value="PYRIDOXAL 5'-PHOSPHATE SYNTHASE SUBUNIT SNO1-RELATED"/>
    <property type="match status" value="1"/>
</dbReference>
<dbReference type="Pfam" id="PF01174">
    <property type="entry name" value="SNO"/>
    <property type="match status" value="1"/>
</dbReference>
<dbReference type="PIRSF" id="PIRSF005639">
    <property type="entry name" value="Glut_amidoT_SNO"/>
    <property type="match status" value="1"/>
</dbReference>
<dbReference type="SUPFAM" id="SSF52317">
    <property type="entry name" value="Class I glutamine amidotransferase-like"/>
    <property type="match status" value="1"/>
</dbReference>
<dbReference type="PROSITE" id="PS01236">
    <property type="entry name" value="PDXT_SNO_1"/>
    <property type="match status" value="1"/>
</dbReference>
<dbReference type="PROSITE" id="PS51130">
    <property type="entry name" value="PDXT_SNO_2"/>
    <property type="match status" value="1"/>
</dbReference>
<protein>
    <recommendedName>
        <fullName>Probable pyridoxal 5'-phosphate synthase subunit SNO3</fullName>
        <ecNumber>4.3.3.6</ecNumber>
    </recommendedName>
    <alternativeName>
        <fullName>PDX2 homolog 3</fullName>
        <shortName>Pdx2.3</shortName>
    </alternativeName>
    <alternativeName>
        <fullName>Pyridoxal 5'-phosphate synthase glutaminase subunit</fullName>
        <ecNumber>3.5.1.2</ecNumber>
    </alternativeName>
</protein>